<proteinExistence type="evidence at protein level"/>
<accession>O24602</accession>
<accession>Q7DLW1</accession>
<dbReference type="EMBL" id="X98496">
    <property type="protein sequence ID" value="CAA67122.1"/>
    <property type="molecule type" value="mRNA"/>
</dbReference>
<dbReference type="EMBL" id="X98497">
    <property type="protein sequence ID" value="CAA67123.1"/>
    <property type="molecule type" value="Genomic_DNA"/>
</dbReference>
<dbReference type="EMBL" id="X99968">
    <property type="protein sequence ID" value="CAA68230.1"/>
    <property type="molecule type" value="Genomic_DNA"/>
</dbReference>
<dbReference type="PIR" id="T03279">
    <property type="entry name" value="T03279"/>
</dbReference>
<dbReference type="RefSeq" id="NP_001105956.1">
    <property type="nucleotide sequence ID" value="NM_001112486.2"/>
</dbReference>
<dbReference type="FunCoup" id="O24602">
    <property type="interactions" value="554"/>
</dbReference>
<dbReference type="STRING" id="4577.O24602"/>
<dbReference type="GlyCosmos" id="O24602">
    <property type="glycosylation" value="1 site, No reported glycans"/>
</dbReference>
<dbReference type="PaxDb" id="4577-GRMZM2G046086_P01"/>
<dbReference type="GeneID" id="100037781"/>
<dbReference type="KEGG" id="zma:100037781"/>
<dbReference type="MaizeGDB" id="230283"/>
<dbReference type="eggNOG" id="ENOG502R4SP">
    <property type="taxonomic scope" value="Eukaryota"/>
</dbReference>
<dbReference type="HOGENOM" id="CLU_1930598_0_0_1"/>
<dbReference type="InParanoid" id="O24602"/>
<dbReference type="OMA" id="NGNMERQ"/>
<dbReference type="OrthoDB" id="662284at2759"/>
<dbReference type="Proteomes" id="UP000007305">
    <property type="component" value="Unplaced"/>
</dbReference>
<dbReference type="ExpressionAtlas" id="O24602">
    <property type="expression patterns" value="baseline and differential"/>
</dbReference>
<dbReference type="GO" id="GO:0048046">
    <property type="term" value="C:apoplast"/>
    <property type="evidence" value="ECO:0000250"/>
    <property type="project" value="UniProtKB"/>
</dbReference>
<dbReference type="GO" id="GO:0033612">
    <property type="term" value="F:receptor serine/threonine kinase binding"/>
    <property type="evidence" value="ECO:0000250"/>
    <property type="project" value="UniProtKB"/>
</dbReference>
<dbReference type="GO" id="GO:0045168">
    <property type="term" value="P:cell-cell signaling involved in cell fate commitment"/>
    <property type="evidence" value="ECO:0000250"/>
    <property type="project" value="UniProtKB"/>
</dbReference>
<sequence>MASRMGMVAIVSLFVCALAASTSVNANVWQTDDIPVVNSNMVRHSNMERQQQQGGFIGHRPRLASFNRASNQDGDRKRTVPSGPDHMHHSIPSHTPQHPPVYVQALYEDDRSRTSSGPSKSIGPPPLSDRY</sequence>
<name>ESR1_MAIZE</name>
<keyword id="KW-0217">Developmental protein</keyword>
<keyword id="KW-0221">Differentiation</keyword>
<keyword id="KW-0325">Glycoprotein</keyword>
<keyword id="KW-0379">Hydroxylation</keyword>
<keyword id="KW-1185">Reference proteome</keyword>
<keyword id="KW-0964">Secreted</keyword>
<keyword id="KW-0732">Signal</keyword>
<organism>
    <name type="scientific">Zea mays</name>
    <name type="common">Maize</name>
    <dbReference type="NCBI Taxonomy" id="4577"/>
    <lineage>
        <taxon>Eukaryota</taxon>
        <taxon>Viridiplantae</taxon>
        <taxon>Streptophyta</taxon>
        <taxon>Embryophyta</taxon>
        <taxon>Tracheophyta</taxon>
        <taxon>Spermatophyta</taxon>
        <taxon>Magnoliopsida</taxon>
        <taxon>Liliopsida</taxon>
        <taxon>Poales</taxon>
        <taxon>Poaceae</taxon>
        <taxon>PACMAD clade</taxon>
        <taxon>Panicoideae</taxon>
        <taxon>Andropogonodae</taxon>
        <taxon>Andropogoneae</taxon>
        <taxon>Tripsacinae</taxon>
        <taxon>Zea</taxon>
    </lineage>
</organism>
<reference key="1">
    <citation type="journal article" date="1997" name="Plant J.">
        <title>ZmEsr, a novel endosperm-specific gene expressed in a restricted region around the maize embryo.</title>
        <authorList>
            <person name="Opsahl-Ferstad H.G."/>
            <person name="Le Deunff E."/>
            <person name="Dumas C."/>
            <person name="Rogowsky P.M."/>
        </authorList>
    </citation>
    <scope>NUCLEOTIDE SEQUENCE [GENOMIC DNA / MRNA]</scope>
    <scope>TISSUE SPECIFICITY</scope>
    <scope>DEVELOPMENTAL STAGE</scope>
    <source>
        <strain>cv. A188</strain>
        <tissue>Endosperm</tissue>
        <tissue>Leaf</tissue>
    </source>
</reference>
<reference key="2">
    <citation type="journal article" date="2002" name="J. Exp. Bot.">
        <title>Esr proteins are secreted by the cells of the embryo surrounding region.</title>
        <authorList>
            <person name="Bonello J.-F."/>
            <person name="Sevilla-Lecoq S."/>
            <person name="Berne A."/>
            <person name="Risueno M.-C."/>
            <person name="Dumas C."/>
            <person name="Rogowsky P.M."/>
        </authorList>
    </citation>
    <scope>TISSUE SPECIFICITY</scope>
    <scope>DEVELOPMENTAL STAGE</scope>
    <scope>SUBCELLULAR LOCATION</scope>
</reference>
<reference key="3">
    <citation type="journal article" date="2008" name="Cell. Mol. Life Sci.">
        <title>The CLE family of plant polypeptide signaling molecules.</title>
        <authorList>
            <person name="Jun J.H."/>
            <person name="Fiume E."/>
            <person name="Fletcher J.C."/>
        </authorList>
    </citation>
    <scope>REVIEW</scope>
</reference>
<reference key="4">
    <citation type="journal article" date="2010" name="Protoplasma">
        <title>CLE peptide signaling during plant development.</title>
        <authorList>
            <person name="Wang G."/>
            <person name="Fiers M."/>
        </authorList>
    </citation>
    <scope>REVIEW</scope>
</reference>
<protein>
    <recommendedName>
        <fullName evidence="7">CLAVATA3/ESR (CLE)-related protein ESR1</fullName>
        <shortName evidence="7">ZmESR1</shortName>
    </recommendedName>
    <alternativeName>
        <fullName evidence="8">Embryo surrounding region protein 1</fullName>
    </alternativeName>
    <component>
        <recommendedName>
            <fullName evidence="8">ESR1p</fullName>
        </recommendedName>
    </component>
</protein>
<comment type="function">
    <molecule>ESR1p</molecule>
    <text evidence="1">Extracellular signal peptide that regulates cell fate.</text>
</comment>
<comment type="subcellular location">
    <molecule>ESR1p</molecule>
    <subcellularLocation>
        <location evidence="5">Secreted</location>
        <location evidence="5">Extracellular space</location>
    </subcellularLocation>
</comment>
<comment type="tissue specificity">
    <molecule>ESR1p</molecule>
    <text evidence="5 6">Seed endosperm.</text>
</comment>
<comment type="developmental stage">
    <molecule>ESR1p</molecule>
    <text evidence="5 6">Expressed specifically in the embryo surrounding region at the micropylar end of the seed endosperm at early stages (4 to 7 days after pollination, DAP) and ever-decreasing parts of the suspensor at subsequent stages (at protein level).</text>
</comment>
<comment type="PTM">
    <molecule>ESR1p</molecule>
    <text evidence="2">The O-glycosylation (arabinosylation) of the hydroxyproline Pro-84 enhances binding affinity of the ESR1p peptide for its receptor.</text>
</comment>
<comment type="similarity">
    <text evidence="9">Belongs to the CLV3/ESR signal peptide family.</text>
</comment>
<gene>
    <name evidence="7" type="primary">ESR1</name>
    <name evidence="8" type="synonym">ESR1c1</name>
    <name evidence="8" type="synonym">ESR1g1</name>
    <name evidence="8" type="synonym">ESR1g2</name>
</gene>
<feature type="signal peptide" evidence="3">
    <location>
        <begin position="1"/>
        <end position="26"/>
    </location>
</feature>
<feature type="chain" id="PRO_0000401221" description="CLAVATA3/ESR (CLE)-related protein ESR1">
    <location>
        <begin position="27"/>
        <end position="131"/>
    </location>
</feature>
<feature type="peptide" id="PRO_0000401222" description="ESR1p" evidence="2">
    <location>
        <begin position="78"/>
        <end position="89"/>
    </location>
</feature>
<feature type="region of interest" description="Disordered" evidence="4">
    <location>
        <begin position="49"/>
        <end position="131"/>
    </location>
</feature>
<feature type="modified residue" description="Hydroxyproline" evidence="2">
    <location>
        <position position="81"/>
    </location>
</feature>
<feature type="modified residue" description="Hydroxyproline" evidence="2">
    <location>
        <position position="84"/>
    </location>
</feature>
<feature type="glycosylation site" description="O-linked (Ara...) hydroxyproline" evidence="2">
    <location>
        <position position="84"/>
    </location>
</feature>
<evidence type="ECO:0000250" key="1"/>
<evidence type="ECO:0000250" key="2">
    <source>
        <dbReference type="UniProtKB" id="O49519"/>
    </source>
</evidence>
<evidence type="ECO:0000255" key="3"/>
<evidence type="ECO:0000256" key="4">
    <source>
        <dbReference type="SAM" id="MobiDB-lite"/>
    </source>
</evidence>
<evidence type="ECO:0000269" key="5">
    <source>
    </source>
</evidence>
<evidence type="ECO:0000269" key="6">
    <source>
    </source>
</evidence>
<evidence type="ECO:0000303" key="7">
    <source>
    </source>
</evidence>
<evidence type="ECO:0000303" key="8">
    <source>
    </source>
</evidence>
<evidence type="ECO:0000305" key="9"/>